<proteinExistence type="inferred from homology"/>
<name>EFG_ACIBS</name>
<accession>B0VTG3</accession>
<gene>
    <name evidence="1" type="primary">fusA</name>
    <name type="ordered locus">ABSDF2568</name>
</gene>
<comment type="function">
    <text evidence="1">Catalyzes the GTP-dependent ribosomal translocation step during translation elongation. During this step, the ribosome changes from the pre-translocational (PRE) to the post-translocational (POST) state as the newly formed A-site-bound peptidyl-tRNA and P-site-bound deacylated tRNA move to the P and E sites, respectively. Catalyzes the coordinated movement of the two tRNA molecules, the mRNA and conformational changes in the ribosome.</text>
</comment>
<comment type="subcellular location">
    <subcellularLocation>
        <location evidence="1">Cytoplasm</location>
    </subcellularLocation>
</comment>
<comment type="similarity">
    <text evidence="1">Belongs to the TRAFAC class translation factor GTPase superfamily. Classic translation factor GTPase family. EF-G/EF-2 subfamily.</text>
</comment>
<evidence type="ECO:0000255" key="1">
    <source>
        <dbReference type="HAMAP-Rule" id="MF_00054"/>
    </source>
</evidence>
<keyword id="KW-0963">Cytoplasm</keyword>
<keyword id="KW-0251">Elongation factor</keyword>
<keyword id="KW-0342">GTP-binding</keyword>
<keyword id="KW-0547">Nucleotide-binding</keyword>
<keyword id="KW-0648">Protein biosynthesis</keyword>
<reference key="1">
    <citation type="journal article" date="2008" name="PLoS ONE">
        <title>Comparative analysis of Acinetobacters: three genomes for three lifestyles.</title>
        <authorList>
            <person name="Vallenet D."/>
            <person name="Nordmann P."/>
            <person name="Barbe V."/>
            <person name="Poirel L."/>
            <person name="Mangenot S."/>
            <person name="Bataille E."/>
            <person name="Dossat C."/>
            <person name="Gas S."/>
            <person name="Kreimeyer A."/>
            <person name="Lenoble P."/>
            <person name="Oztas S."/>
            <person name="Poulain J."/>
            <person name="Segurens B."/>
            <person name="Robert C."/>
            <person name="Abergel C."/>
            <person name="Claverie J.-M."/>
            <person name="Raoult D."/>
            <person name="Medigue C."/>
            <person name="Weissenbach J."/>
            <person name="Cruveiller S."/>
        </authorList>
    </citation>
    <scope>NUCLEOTIDE SEQUENCE [LARGE SCALE GENOMIC DNA]</scope>
    <source>
        <strain>SDF</strain>
    </source>
</reference>
<feature type="chain" id="PRO_1000091685" description="Elongation factor G">
    <location>
        <begin position="1"/>
        <end position="712"/>
    </location>
</feature>
<feature type="domain" description="tr-type G">
    <location>
        <begin position="8"/>
        <end position="290"/>
    </location>
</feature>
<feature type="binding site" evidence="1">
    <location>
        <begin position="17"/>
        <end position="24"/>
    </location>
    <ligand>
        <name>GTP</name>
        <dbReference type="ChEBI" id="CHEBI:37565"/>
    </ligand>
</feature>
<feature type="binding site" evidence="1">
    <location>
        <begin position="88"/>
        <end position="92"/>
    </location>
    <ligand>
        <name>GTP</name>
        <dbReference type="ChEBI" id="CHEBI:37565"/>
    </ligand>
</feature>
<feature type="binding site" evidence="1">
    <location>
        <begin position="142"/>
        <end position="145"/>
    </location>
    <ligand>
        <name>GTP</name>
        <dbReference type="ChEBI" id="CHEBI:37565"/>
    </ligand>
</feature>
<organism>
    <name type="scientific">Acinetobacter baumannii (strain SDF)</name>
    <dbReference type="NCBI Taxonomy" id="509170"/>
    <lineage>
        <taxon>Bacteria</taxon>
        <taxon>Pseudomonadati</taxon>
        <taxon>Pseudomonadota</taxon>
        <taxon>Gammaproteobacteria</taxon>
        <taxon>Moraxellales</taxon>
        <taxon>Moraxellaceae</taxon>
        <taxon>Acinetobacter</taxon>
        <taxon>Acinetobacter calcoaceticus/baumannii complex</taxon>
    </lineage>
</organism>
<sequence>MARQTPITRYRNIGISAHIDAGKTTTTERILFYTGVSHKIGEVHDGAATMDWMEQEQERGITITSAATTCFWSGMGNQFPQYRINVIDTPGHVDFTIEVERSMRVLDGACMVYCAVGGVQPQSETVWRQANKYKVPRLAFVNKMDRTGANFFRVVEQMKTRLGANPVPIVVPIGAEDTFTGVVDLIEMKAIIWDEASQGMKFEYGEIPADLVDTAQEWRTNMVEAAAEASEELMDKYLEEGDLSKEDIIAGLRARTLASEIQVMLCGSAFKNKGVQRMLDAVIEFLPSPTEVKAIEGILDDKDETKASREASDEAPFSALAFKIMNDKFVGNLTFVRVYSGVLKQGDAVYNPVKSKRERIGRIVQMHANERQDIDEIRAGDIAACVGLKDVTTGDTLCDEKNIITLERMEFPDPVIQLAVEPKTKADQEKMSIALGRLAKEDPSFRVHTDEESGQTIIAGMGELHLDIIVDRMKREFGVEANIGKPMVAYRETIKKTVEQEGKFVRQTGGKGKFGHVYVRLEPLDVEAAGKEYEFAEEVVGGVVPKEFFGAVDKGIQERMKNGVLAGYPVVGVKAVLFDGSYHDVDSDELSFKMAGSYAFRDGFMKADPVLLEPIMKVEVETPEDYMGDIMGDLNRRRGMVQGMDDLPGGTKAIKAEVPLAEMFGYATQMRSMSQGRATYSMEFAKYAETPRNVAEGIIAKFQAGGKKGDDE</sequence>
<dbReference type="EMBL" id="CU468230">
    <property type="protein sequence ID" value="CAP01878.1"/>
    <property type="molecule type" value="Genomic_DNA"/>
</dbReference>
<dbReference type="SMR" id="B0VTG3"/>
<dbReference type="KEGG" id="abm:ABSDF2568"/>
<dbReference type="HOGENOM" id="CLU_002794_4_1_6"/>
<dbReference type="Proteomes" id="UP000001741">
    <property type="component" value="Chromosome"/>
</dbReference>
<dbReference type="GO" id="GO:0005737">
    <property type="term" value="C:cytoplasm"/>
    <property type="evidence" value="ECO:0007669"/>
    <property type="project" value="UniProtKB-SubCell"/>
</dbReference>
<dbReference type="GO" id="GO:0005525">
    <property type="term" value="F:GTP binding"/>
    <property type="evidence" value="ECO:0007669"/>
    <property type="project" value="UniProtKB-UniRule"/>
</dbReference>
<dbReference type="GO" id="GO:0003924">
    <property type="term" value="F:GTPase activity"/>
    <property type="evidence" value="ECO:0007669"/>
    <property type="project" value="InterPro"/>
</dbReference>
<dbReference type="GO" id="GO:0097216">
    <property type="term" value="F:guanosine tetraphosphate binding"/>
    <property type="evidence" value="ECO:0007669"/>
    <property type="project" value="UniProtKB-ARBA"/>
</dbReference>
<dbReference type="GO" id="GO:0003746">
    <property type="term" value="F:translation elongation factor activity"/>
    <property type="evidence" value="ECO:0007669"/>
    <property type="project" value="UniProtKB-UniRule"/>
</dbReference>
<dbReference type="GO" id="GO:0032790">
    <property type="term" value="P:ribosome disassembly"/>
    <property type="evidence" value="ECO:0007669"/>
    <property type="project" value="TreeGrafter"/>
</dbReference>
<dbReference type="CDD" id="cd01886">
    <property type="entry name" value="EF-G"/>
    <property type="match status" value="1"/>
</dbReference>
<dbReference type="CDD" id="cd16262">
    <property type="entry name" value="EFG_III"/>
    <property type="match status" value="1"/>
</dbReference>
<dbReference type="CDD" id="cd01434">
    <property type="entry name" value="EFG_mtEFG1_IV"/>
    <property type="match status" value="1"/>
</dbReference>
<dbReference type="CDD" id="cd03713">
    <property type="entry name" value="EFG_mtEFG_C"/>
    <property type="match status" value="1"/>
</dbReference>
<dbReference type="CDD" id="cd04088">
    <property type="entry name" value="EFG_mtEFG_II"/>
    <property type="match status" value="1"/>
</dbReference>
<dbReference type="FunFam" id="2.40.30.10:FF:000006">
    <property type="entry name" value="Elongation factor G"/>
    <property type="match status" value="1"/>
</dbReference>
<dbReference type="FunFam" id="3.30.230.10:FF:000003">
    <property type="entry name" value="Elongation factor G"/>
    <property type="match status" value="1"/>
</dbReference>
<dbReference type="FunFam" id="3.30.70.240:FF:000001">
    <property type="entry name" value="Elongation factor G"/>
    <property type="match status" value="1"/>
</dbReference>
<dbReference type="FunFam" id="3.30.70.870:FF:000001">
    <property type="entry name" value="Elongation factor G"/>
    <property type="match status" value="1"/>
</dbReference>
<dbReference type="FunFam" id="3.40.50.300:FF:000029">
    <property type="entry name" value="Elongation factor G"/>
    <property type="match status" value="1"/>
</dbReference>
<dbReference type="Gene3D" id="3.30.230.10">
    <property type="match status" value="1"/>
</dbReference>
<dbReference type="Gene3D" id="3.30.70.240">
    <property type="match status" value="1"/>
</dbReference>
<dbReference type="Gene3D" id="3.30.70.870">
    <property type="entry name" value="Elongation Factor G (Translational Gtpase), domain 3"/>
    <property type="match status" value="1"/>
</dbReference>
<dbReference type="Gene3D" id="3.40.50.300">
    <property type="entry name" value="P-loop containing nucleotide triphosphate hydrolases"/>
    <property type="match status" value="1"/>
</dbReference>
<dbReference type="Gene3D" id="2.40.30.10">
    <property type="entry name" value="Translation factors"/>
    <property type="match status" value="1"/>
</dbReference>
<dbReference type="HAMAP" id="MF_00054_B">
    <property type="entry name" value="EF_G_EF_2_B"/>
    <property type="match status" value="1"/>
</dbReference>
<dbReference type="InterPro" id="IPR041095">
    <property type="entry name" value="EFG_II"/>
</dbReference>
<dbReference type="InterPro" id="IPR009022">
    <property type="entry name" value="EFG_III"/>
</dbReference>
<dbReference type="InterPro" id="IPR035647">
    <property type="entry name" value="EFG_III/V"/>
</dbReference>
<dbReference type="InterPro" id="IPR047872">
    <property type="entry name" value="EFG_IV"/>
</dbReference>
<dbReference type="InterPro" id="IPR035649">
    <property type="entry name" value="EFG_V"/>
</dbReference>
<dbReference type="InterPro" id="IPR000640">
    <property type="entry name" value="EFG_V-like"/>
</dbReference>
<dbReference type="InterPro" id="IPR004161">
    <property type="entry name" value="EFTu-like_2"/>
</dbReference>
<dbReference type="InterPro" id="IPR031157">
    <property type="entry name" value="G_TR_CS"/>
</dbReference>
<dbReference type="InterPro" id="IPR027417">
    <property type="entry name" value="P-loop_NTPase"/>
</dbReference>
<dbReference type="InterPro" id="IPR020568">
    <property type="entry name" value="Ribosomal_Su5_D2-typ_SF"/>
</dbReference>
<dbReference type="InterPro" id="IPR014721">
    <property type="entry name" value="Ribsml_uS5_D2-typ_fold_subgr"/>
</dbReference>
<dbReference type="InterPro" id="IPR005225">
    <property type="entry name" value="Small_GTP-bd"/>
</dbReference>
<dbReference type="InterPro" id="IPR000795">
    <property type="entry name" value="T_Tr_GTP-bd_dom"/>
</dbReference>
<dbReference type="InterPro" id="IPR009000">
    <property type="entry name" value="Transl_B-barrel_sf"/>
</dbReference>
<dbReference type="InterPro" id="IPR004540">
    <property type="entry name" value="Transl_elong_EFG/EF2"/>
</dbReference>
<dbReference type="InterPro" id="IPR005517">
    <property type="entry name" value="Transl_elong_EFG/EF2_IV"/>
</dbReference>
<dbReference type="NCBIfam" id="TIGR00484">
    <property type="entry name" value="EF-G"/>
    <property type="match status" value="1"/>
</dbReference>
<dbReference type="NCBIfam" id="NF009381">
    <property type="entry name" value="PRK12740.1-5"/>
    <property type="match status" value="1"/>
</dbReference>
<dbReference type="NCBIfam" id="TIGR00231">
    <property type="entry name" value="small_GTP"/>
    <property type="match status" value="1"/>
</dbReference>
<dbReference type="PANTHER" id="PTHR43261:SF1">
    <property type="entry name" value="RIBOSOME-RELEASING FACTOR 2, MITOCHONDRIAL"/>
    <property type="match status" value="1"/>
</dbReference>
<dbReference type="PANTHER" id="PTHR43261">
    <property type="entry name" value="TRANSLATION ELONGATION FACTOR G-RELATED"/>
    <property type="match status" value="1"/>
</dbReference>
<dbReference type="Pfam" id="PF00679">
    <property type="entry name" value="EFG_C"/>
    <property type="match status" value="1"/>
</dbReference>
<dbReference type="Pfam" id="PF14492">
    <property type="entry name" value="EFG_III"/>
    <property type="match status" value="1"/>
</dbReference>
<dbReference type="Pfam" id="PF03764">
    <property type="entry name" value="EFG_IV"/>
    <property type="match status" value="1"/>
</dbReference>
<dbReference type="Pfam" id="PF00009">
    <property type="entry name" value="GTP_EFTU"/>
    <property type="match status" value="1"/>
</dbReference>
<dbReference type="Pfam" id="PF03144">
    <property type="entry name" value="GTP_EFTU_D2"/>
    <property type="match status" value="1"/>
</dbReference>
<dbReference type="PRINTS" id="PR00315">
    <property type="entry name" value="ELONGATNFCT"/>
</dbReference>
<dbReference type="SMART" id="SM00838">
    <property type="entry name" value="EFG_C"/>
    <property type="match status" value="1"/>
</dbReference>
<dbReference type="SMART" id="SM00889">
    <property type="entry name" value="EFG_IV"/>
    <property type="match status" value="1"/>
</dbReference>
<dbReference type="SUPFAM" id="SSF54980">
    <property type="entry name" value="EF-G C-terminal domain-like"/>
    <property type="match status" value="2"/>
</dbReference>
<dbReference type="SUPFAM" id="SSF52540">
    <property type="entry name" value="P-loop containing nucleoside triphosphate hydrolases"/>
    <property type="match status" value="1"/>
</dbReference>
<dbReference type="SUPFAM" id="SSF54211">
    <property type="entry name" value="Ribosomal protein S5 domain 2-like"/>
    <property type="match status" value="1"/>
</dbReference>
<dbReference type="SUPFAM" id="SSF50447">
    <property type="entry name" value="Translation proteins"/>
    <property type="match status" value="1"/>
</dbReference>
<dbReference type="PROSITE" id="PS00301">
    <property type="entry name" value="G_TR_1"/>
    <property type="match status" value="1"/>
</dbReference>
<dbReference type="PROSITE" id="PS51722">
    <property type="entry name" value="G_TR_2"/>
    <property type="match status" value="1"/>
</dbReference>
<protein>
    <recommendedName>
        <fullName evidence="1">Elongation factor G</fullName>
        <shortName evidence="1">EF-G</shortName>
    </recommendedName>
</protein>